<name>MINC_BACC7</name>
<sequence length="228" mass="25229">MEEKKQQNVTIKGTKDGITLHLDDCCSFSELLKELDEKLSTHYYDGDGRSLIEVHVKVGNRYLTEVQQEEIRTLIRNKKNLVVDSIESDVITKEEAIAWKEETEIVPISKIVRSGQVLHVKGNLLLIGDVNPGGTVIAGGNIFVVGSLRGIAHAGYYGDSDAVIAASVMNPMQLRISDVAMRAPEEKEDGAEAAECAYINENNHIVVDRLQLLTHLRPNLTKLERGIV</sequence>
<feature type="chain" id="PRO_1000191231" description="Probable septum site-determining protein MinC">
    <location>
        <begin position="1"/>
        <end position="228"/>
    </location>
</feature>
<keyword id="KW-0131">Cell cycle</keyword>
<keyword id="KW-0132">Cell division</keyword>
<keyword id="KW-0717">Septation</keyword>
<comment type="function">
    <text evidence="1">Cell division inhibitor that blocks the formation of polar Z ring septums. Rapidly oscillates between the poles of the cell to destabilize FtsZ filaments that have formed before they mature into polar Z rings. Prevents FtsZ polymerization.</text>
</comment>
<comment type="subunit">
    <text evidence="1">Interacts with MinD and FtsZ.</text>
</comment>
<comment type="similarity">
    <text evidence="1">Belongs to the MinC family.</text>
</comment>
<gene>
    <name evidence="1" type="primary">minC</name>
    <name type="ordered locus">BCAH187_A4583</name>
</gene>
<reference key="1">
    <citation type="submission" date="2008-10" db="EMBL/GenBank/DDBJ databases">
        <title>Genome sequence of Bacillus cereus AH187.</title>
        <authorList>
            <person name="Dodson R.J."/>
            <person name="Durkin A.S."/>
            <person name="Rosovitz M.J."/>
            <person name="Rasko D.A."/>
            <person name="Kolsto A.B."/>
            <person name="Okstad O.A."/>
            <person name="Ravel J."/>
            <person name="Sutton G."/>
        </authorList>
    </citation>
    <scope>NUCLEOTIDE SEQUENCE [LARGE SCALE GENOMIC DNA]</scope>
    <source>
        <strain>AH187</strain>
    </source>
</reference>
<evidence type="ECO:0000255" key="1">
    <source>
        <dbReference type="HAMAP-Rule" id="MF_00267"/>
    </source>
</evidence>
<accession>B7HQK7</accession>
<organism>
    <name type="scientific">Bacillus cereus (strain AH187)</name>
    <dbReference type="NCBI Taxonomy" id="405534"/>
    <lineage>
        <taxon>Bacteria</taxon>
        <taxon>Bacillati</taxon>
        <taxon>Bacillota</taxon>
        <taxon>Bacilli</taxon>
        <taxon>Bacillales</taxon>
        <taxon>Bacillaceae</taxon>
        <taxon>Bacillus</taxon>
        <taxon>Bacillus cereus group</taxon>
    </lineage>
</organism>
<dbReference type="EMBL" id="CP001177">
    <property type="protein sequence ID" value="ACJ80616.1"/>
    <property type="molecule type" value="Genomic_DNA"/>
</dbReference>
<dbReference type="SMR" id="B7HQK7"/>
<dbReference type="KEGG" id="bcr:BCAH187_A4583"/>
<dbReference type="HOGENOM" id="CLU_048711_1_1_9"/>
<dbReference type="Proteomes" id="UP000002214">
    <property type="component" value="Chromosome"/>
</dbReference>
<dbReference type="GO" id="GO:0000902">
    <property type="term" value="P:cell morphogenesis"/>
    <property type="evidence" value="ECO:0007669"/>
    <property type="project" value="InterPro"/>
</dbReference>
<dbReference type="GO" id="GO:0000917">
    <property type="term" value="P:division septum assembly"/>
    <property type="evidence" value="ECO:0007669"/>
    <property type="project" value="UniProtKB-KW"/>
</dbReference>
<dbReference type="GO" id="GO:1901891">
    <property type="term" value="P:regulation of cell septum assembly"/>
    <property type="evidence" value="ECO:0007669"/>
    <property type="project" value="InterPro"/>
</dbReference>
<dbReference type="FunFam" id="2.160.20.70:FF:000003">
    <property type="entry name" value="Probable septum site-determining protein MinC"/>
    <property type="match status" value="1"/>
</dbReference>
<dbReference type="FunFam" id="3.30.160.540:FF:000001">
    <property type="entry name" value="Probable septum site-determining protein MinC"/>
    <property type="match status" value="1"/>
</dbReference>
<dbReference type="Gene3D" id="2.160.20.70">
    <property type="match status" value="1"/>
</dbReference>
<dbReference type="Gene3D" id="3.30.160.540">
    <property type="match status" value="1"/>
</dbReference>
<dbReference type="HAMAP" id="MF_00267">
    <property type="entry name" value="MinC"/>
    <property type="match status" value="1"/>
</dbReference>
<dbReference type="InterPro" id="IPR016098">
    <property type="entry name" value="CAP/MinC_C"/>
</dbReference>
<dbReference type="InterPro" id="IPR013033">
    <property type="entry name" value="MinC"/>
</dbReference>
<dbReference type="InterPro" id="IPR036145">
    <property type="entry name" value="MinC_C_sf"/>
</dbReference>
<dbReference type="InterPro" id="IPR055219">
    <property type="entry name" value="MinC_N_1"/>
</dbReference>
<dbReference type="InterPro" id="IPR005526">
    <property type="entry name" value="Septum_form_inhib_MinC_C"/>
</dbReference>
<dbReference type="NCBIfam" id="TIGR01222">
    <property type="entry name" value="minC"/>
    <property type="match status" value="1"/>
</dbReference>
<dbReference type="PANTHER" id="PTHR34108">
    <property type="entry name" value="SEPTUM SITE-DETERMINING PROTEIN MINC"/>
    <property type="match status" value="1"/>
</dbReference>
<dbReference type="PANTHER" id="PTHR34108:SF1">
    <property type="entry name" value="SEPTUM SITE-DETERMINING PROTEIN MINC"/>
    <property type="match status" value="1"/>
</dbReference>
<dbReference type="Pfam" id="PF03775">
    <property type="entry name" value="MinC_C"/>
    <property type="match status" value="1"/>
</dbReference>
<dbReference type="Pfam" id="PF22642">
    <property type="entry name" value="MinC_N_1"/>
    <property type="match status" value="1"/>
</dbReference>
<dbReference type="SUPFAM" id="SSF63848">
    <property type="entry name" value="Cell-division inhibitor MinC, C-terminal domain"/>
    <property type="match status" value="1"/>
</dbReference>
<protein>
    <recommendedName>
        <fullName evidence="1">Probable septum site-determining protein MinC</fullName>
    </recommendedName>
</protein>
<proteinExistence type="inferred from homology"/>